<accession>Q6GMH0</accession>
<accession>A3KPM2</accession>
<dbReference type="EMBL" id="BX248392">
    <property type="protein sequence ID" value="CAM56405.1"/>
    <property type="molecule type" value="Genomic_DNA"/>
</dbReference>
<dbReference type="EMBL" id="BC074081">
    <property type="protein sequence ID" value="AAH74081.1"/>
    <property type="molecule type" value="mRNA"/>
</dbReference>
<dbReference type="RefSeq" id="NP_001002204.1">
    <property type="nucleotide sequence ID" value="NM_001002204.1"/>
</dbReference>
<dbReference type="SMR" id="Q6GMH0"/>
<dbReference type="BioGRID" id="91716">
    <property type="interactions" value="1"/>
</dbReference>
<dbReference type="FunCoup" id="Q6GMH0">
    <property type="interactions" value="1933"/>
</dbReference>
<dbReference type="STRING" id="7955.ENSDARP00000075597"/>
<dbReference type="PaxDb" id="7955-ENSDARP00000075597"/>
<dbReference type="GeneID" id="431751"/>
<dbReference type="KEGG" id="dre:431751"/>
<dbReference type="AGR" id="ZFIN:ZDB-GENE-040704-45"/>
<dbReference type="CTD" id="8559"/>
<dbReference type="ZFIN" id="ZDB-GENE-040704-45">
    <property type="gene designation" value="prpf18"/>
</dbReference>
<dbReference type="eggNOG" id="KOG2808">
    <property type="taxonomic scope" value="Eukaryota"/>
</dbReference>
<dbReference type="InParanoid" id="Q6GMH0"/>
<dbReference type="OrthoDB" id="10261918at2759"/>
<dbReference type="PhylomeDB" id="Q6GMH0"/>
<dbReference type="TreeFam" id="TF315049"/>
<dbReference type="Reactome" id="R-DRE-72163">
    <property type="pathway name" value="mRNA Splicing - Major Pathway"/>
</dbReference>
<dbReference type="PRO" id="PR:Q6GMH0"/>
<dbReference type="Proteomes" id="UP000000437">
    <property type="component" value="Alternate scaffold 18"/>
</dbReference>
<dbReference type="Proteomes" id="UP000000437">
    <property type="component" value="Chromosome 18"/>
</dbReference>
<dbReference type="GO" id="GO:0016607">
    <property type="term" value="C:nuclear speck"/>
    <property type="evidence" value="ECO:0007669"/>
    <property type="project" value="UniProtKB-SubCell"/>
</dbReference>
<dbReference type="GO" id="GO:0071021">
    <property type="term" value="C:U2-type post-spliceosomal complex"/>
    <property type="evidence" value="ECO:0000318"/>
    <property type="project" value="GO_Central"/>
</dbReference>
<dbReference type="GO" id="GO:0046540">
    <property type="term" value="C:U4/U6 x U5 tri-snRNP complex"/>
    <property type="evidence" value="ECO:0000318"/>
    <property type="project" value="GO_Central"/>
</dbReference>
<dbReference type="GO" id="GO:0005682">
    <property type="term" value="C:U5 snRNP"/>
    <property type="evidence" value="ECO:0000318"/>
    <property type="project" value="GO_Central"/>
</dbReference>
<dbReference type="GO" id="GO:0000350">
    <property type="term" value="P:generation of catalytic spliceosome for second transesterification step"/>
    <property type="evidence" value="ECO:0000318"/>
    <property type="project" value="GO_Central"/>
</dbReference>
<dbReference type="FunFam" id="1.20.940.10:FF:000002">
    <property type="entry name" value="Pre-mRNA processing factor 18"/>
    <property type="match status" value="1"/>
</dbReference>
<dbReference type="FunFam" id="4.10.280.110:FF:000001">
    <property type="entry name" value="pre-mRNA-splicing factor 18 isoform X2"/>
    <property type="match status" value="1"/>
</dbReference>
<dbReference type="Gene3D" id="1.20.940.10">
    <property type="entry name" value="Functional domain of the splicing factor Prp18"/>
    <property type="match status" value="1"/>
</dbReference>
<dbReference type="Gene3D" id="4.10.280.110">
    <property type="entry name" value="Pre-mRNA processing factor 4 domain"/>
    <property type="match status" value="1"/>
</dbReference>
<dbReference type="InterPro" id="IPR004098">
    <property type="entry name" value="Prp18"/>
</dbReference>
<dbReference type="InterPro" id="IPR014906">
    <property type="entry name" value="PRP4-like"/>
</dbReference>
<dbReference type="InterPro" id="IPR036285">
    <property type="entry name" value="PRP4-like_sf"/>
</dbReference>
<dbReference type="InterPro" id="IPR039979">
    <property type="entry name" value="PRPF18"/>
</dbReference>
<dbReference type="PANTHER" id="PTHR13007">
    <property type="entry name" value="PRE-MRNA SPLICING FACTOR-RELATED"/>
    <property type="match status" value="1"/>
</dbReference>
<dbReference type="PANTHER" id="PTHR13007:SF19">
    <property type="entry name" value="PRE-MRNA-SPLICING FACTOR 18"/>
    <property type="match status" value="1"/>
</dbReference>
<dbReference type="Pfam" id="PF02840">
    <property type="entry name" value="Prp18"/>
    <property type="match status" value="1"/>
</dbReference>
<dbReference type="Pfam" id="PF08799">
    <property type="entry name" value="PRP4"/>
    <property type="match status" value="1"/>
</dbReference>
<dbReference type="SMART" id="SM00500">
    <property type="entry name" value="SFM"/>
    <property type="match status" value="1"/>
</dbReference>
<dbReference type="SUPFAM" id="SSF47938">
    <property type="entry name" value="Functional domain of the splicing factor Prp18"/>
    <property type="match status" value="1"/>
</dbReference>
<dbReference type="SUPFAM" id="SSF158230">
    <property type="entry name" value="PRP4-like"/>
    <property type="match status" value="1"/>
</dbReference>
<comment type="function">
    <text evidence="1">Participates in the second step of pre-mRNA splicing.</text>
</comment>
<comment type="subunit">
    <text evidence="1">Interacts with the spliceosome. Part of a complex containing U4/U6 snRNPs (By similarity).</text>
</comment>
<comment type="subcellular location">
    <subcellularLocation>
        <location evidence="1">Nucleus speckle</location>
    </subcellularLocation>
    <text evidence="1">Colocalizes with spliceosomal snRNPs.</text>
</comment>
<comment type="similarity">
    <text evidence="2">Belongs to the PRP18 family.</text>
</comment>
<evidence type="ECO:0000250" key="1"/>
<evidence type="ECO:0000305" key="2"/>
<sequence>MDILKAEIARKRKLIEEKELIDDSKKYFKRAELARKEEEDYYRRCGYKMDKPEEEAPQSTSANPVLELELTEEKLPMTLSRQEVIRRLRERGEPIRLFGESDYDAFQRLRKIEILAPEVNKGLRNDLKAAMDKIDQQYLNEIVGGAEGAELDTQHDLKVHEENTTIEELEALGASLGNGNDVRDMDIINKVLRFLLGVWAKDLNSREDHIKRSVQGKLASATQKQTESYLEPLFRKLRKKNLPADIKESITDIIKFMLEREYVKANDAYLQMAIGNAPWPIGVTMVGIHARTGREKIFSKHVAHVLNDETQRKYIQGLKRLMTICQKHFPTDPSKCVEYNAL</sequence>
<gene>
    <name type="primary">prpf18</name>
    <name type="ORF">si:ch211-220f12.3</name>
</gene>
<proteinExistence type="evidence at transcript level"/>
<protein>
    <recommendedName>
        <fullName>Pre-mRNA-splicing factor 18</fullName>
    </recommendedName>
    <alternativeName>
        <fullName>PRP18 homolog</fullName>
    </alternativeName>
</protein>
<organism>
    <name type="scientific">Danio rerio</name>
    <name type="common">Zebrafish</name>
    <name type="synonym">Brachydanio rerio</name>
    <dbReference type="NCBI Taxonomy" id="7955"/>
    <lineage>
        <taxon>Eukaryota</taxon>
        <taxon>Metazoa</taxon>
        <taxon>Chordata</taxon>
        <taxon>Craniata</taxon>
        <taxon>Vertebrata</taxon>
        <taxon>Euteleostomi</taxon>
        <taxon>Actinopterygii</taxon>
        <taxon>Neopterygii</taxon>
        <taxon>Teleostei</taxon>
        <taxon>Ostariophysi</taxon>
        <taxon>Cypriniformes</taxon>
        <taxon>Danionidae</taxon>
        <taxon>Danioninae</taxon>
        <taxon>Danio</taxon>
    </lineage>
</organism>
<keyword id="KW-0507">mRNA processing</keyword>
<keyword id="KW-0508">mRNA splicing</keyword>
<keyword id="KW-0539">Nucleus</keyword>
<keyword id="KW-1185">Reference proteome</keyword>
<keyword id="KW-0747">Spliceosome</keyword>
<reference key="1">
    <citation type="journal article" date="2013" name="Nature">
        <title>The zebrafish reference genome sequence and its relationship to the human genome.</title>
        <authorList>
            <person name="Howe K."/>
            <person name="Clark M.D."/>
            <person name="Torroja C.F."/>
            <person name="Torrance J."/>
            <person name="Berthelot C."/>
            <person name="Muffato M."/>
            <person name="Collins J.E."/>
            <person name="Humphray S."/>
            <person name="McLaren K."/>
            <person name="Matthews L."/>
            <person name="McLaren S."/>
            <person name="Sealy I."/>
            <person name="Caccamo M."/>
            <person name="Churcher C."/>
            <person name="Scott C."/>
            <person name="Barrett J.C."/>
            <person name="Koch R."/>
            <person name="Rauch G.J."/>
            <person name="White S."/>
            <person name="Chow W."/>
            <person name="Kilian B."/>
            <person name="Quintais L.T."/>
            <person name="Guerra-Assuncao J.A."/>
            <person name="Zhou Y."/>
            <person name="Gu Y."/>
            <person name="Yen J."/>
            <person name="Vogel J.H."/>
            <person name="Eyre T."/>
            <person name="Redmond S."/>
            <person name="Banerjee R."/>
            <person name="Chi J."/>
            <person name="Fu B."/>
            <person name="Langley E."/>
            <person name="Maguire S.F."/>
            <person name="Laird G.K."/>
            <person name="Lloyd D."/>
            <person name="Kenyon E."/>
            <person name="Donaldson S."/>
            <person name="Sehra H."/>
            <person name="Almeida-King J."/>
            <person name="Loveland J."/>
            <person name="Trevanion S."/>
            <person name="Jones M."/>
            <person name="Quail M."/>
            <person name="Willey D."/>
            <person name="Hunt A."/>
            <person name="Burton J."/>
            <person name="Sims S."/>
            <person name="McLay K."/>
            <person name="Plumb B."/>
            <person name="Davis J."/>
            <person name="Clee C."/>
            <person name="Oliver K."/>
            <person name="Clark R."/>
            <person name="Riddle C."/>
            <person name="Elliot D."/>
            <person name="Threadgold G."/>
            <person name="Harden G."/>
            <person name="Ware D."/>
            <person name="Begum S."/>
            <person name="Mortimore B."/>
            <person name="Kerry G."/>
            <person name="Heath P."/>
            <person name="Phillimore B."/>
            <person name="Tracey A."/>
            <person name="Corby N."/>
            <person name="Dunn M."/>
            <person name="Johnson C."/>
            <person name="Wood J."/>
            <person name="Clark S."/>
            <person name="Pelan S."/>
            <person name="Griffiths G."/>
            <person name="Smith M."/>
            <person name="Glithero R."/>
            <person name="Howden P."/>
            <person name="Barker N."/>
            <person name="Lloyd C."/>
            <person name="Stevens C."/>
            <person name="Harley J."/>
            <person name="Holt K."/>
            <person name="Panagiotidis G."/>
            <person name="Lovell J."/>
            <person name="Beasley H."/>
            <person name="Henderson C."/>
            <person name="Gordon D."/>
            <person name="Auger K."/>
            <person name="Wright D."/>
            <person name="Collins J."/>
            <person name="Raisen C."/>
            <person name="Dyer L."/>
            <person name="Leung K."/>
            <person name="Robertson L."/>
            <person name="Ambridge K."/>
            <person name="Leongamornlert D."/>
            <person name="McGuire S."/>
            <person name="Gilderthorp R."/>
            <person name="Griffiths C."/>
            <person name="Manthravadi D."/>
            <person name="Nichol S."/>
            <person name="Barker G."/>
            <person name="Whitehead S."/>
            <person name="Kay M."/>
            <person name="Brown J."/>
            <person name="Murnane C."/>
            <person name="Gray E."/>
            <person name="Humphries M."/>
            <person name="Sycamore N."/>
            <person name="Barker D."/>
            <person name="Saunders D."/>
            <person name="Wallis J."/>
            <person name="Babbage A."/>
            <person name="Hammond S."/>
            <person name="Mashreghi-Mohammadi M."/>
            <person name="Barr L."/>
            <person name="Martin S."/>
            <person name="Wray P."/>
            <person name="Ellington A."/>
            <person name="Matthews N."/>
            <person name="Ellwood M."/>
            <person name="Woodmansey R."/>
            <person name="Clark G."/>
            <person name="Cooper J."/>
            <person name="Tromans A."/>
            <person name="Grafham D."/>
            <person name="Skuce C."/>
            <person name="Pandian R."/>
            <person name="Andrews R."/>
            <person name="Harrison E."/>
            <person name="Kimberley A."/>
            <person name="Garnett J."/>
            <person name="Fosker N."/>
            <person name="Hall R."/>
            <person name="Garner P."/>
            <person name="Kelly D."/>
            <person name="Bird C."/>
            <person name="Palmer S."/>
            <person name="Gehring I."/>
            <person name="Berger A."/>
            <person name="Dooley C.M."/>
            <person name="Ersan-Urun Z."/>
            <person name="Eser C."/>
            <person name="Geiger H."/>
            <person name="Geisler M."/>
            <person name="Karotki L."/>
            <person name="Kirn A."/>
            <person name="Konantz J."/>
            <person name="Konantz M."/>
            <person name="Oberlander M."/>
            <person name="Rudolph-Geiger S."/>
            <person name="Teucke M."/>
            <person name="Lanz C."/>
            <person name="Raddatz G."/>
            <person name="Osoegawa K."/>
            <person name="Zhu B."/>
            <person name="Rapp A."/>
            <person name="Widaa S."/>
            <person name="Langford C."/>
            <person name="Yang F."/>
            <person name="Schuster S.C."/>
            <person name="Carter N.P."/>
            <person name="Harrow J."/>
            <person name="Ning Z."/>
            <person name="Herrero J."/>
            <person name="Searle S.M."/>
            <person name="Enright A."/>
            <person name="Geisler R."/>
            <person name="Plasterk R.H."/>
            <person name="Lee C."/>
            <person name="Westerfield M."/>
            <person name="de Jong P.J."/>
            <person name="Zon L.I."/>
            <person name="Postlethwait J.H."/>
            <person name="Nusslein-Volhard C."/>
            <person name="Hubbard T.J."/>
            <person name="Roest Crollius H."/>
            <person name="Rogers J."/>
            <person name="Stemple D.L."/>
        </authorList>
    </citation>
    <scope>NUCLEOTIDE SEQUENCE [LARGE SCALE GENOMIC DNA]</scope>
    <source>
        <strain>Tuebingen</strain>
    </source>
</reference>
<reference key="2">
    <citation type="submission" date="2004-06" db="EMBL/GenBank/DDBJ databases">
        <authorList>
            <consortium name="NIH - Zebrafish Gene Collection (ZGC) project"/>
        </authorList>
    </citation>
    <scope>NUCLEOTIDE SEQUENCE [LARGE SCALE MRNA]</scope>
</reference>
<name>PRP18_DANRE</name>
<feature type="chain" id="PRO_0000324101" description="Pre-mRNA-splicing factor 18">
    <location>
        <begin position="1"/>
        <end position="342"/>
    </location>
</feature>
<feature type="sequence conflict" description="In Ref. 2; CAM56405." evidence="2" ref="2">
    <original>N</original>
    <variation>T</variation>
    <location>
        <position position="178"/>
    </location>
</feature>